<accession>A4W5M3</accession>
<sequence length="331" mass="34030">MKIKATIERIPGGMMLVPLVLGAILNTLAPNTGAYFGGFTKGMISGTVPILAVWFFCIGASINLRATGTVLRKSGTLVLTKIAVAWVVAMGCAMFIPENGIQTGFFAGLSVLAIVSAMDMTNGGLYASLMNQYGTKEESGAFVLMSLESGPLVTMLILGSAGLASFEPHHFVGAVLPFLIGFALGNLDTDLRDFFSKATPVLIPFFGFALGNTINLNVIMDTGLLGIVLGVAVIIITGIPLIIADRVIGGGNGTAGVAASSAAGAAVANPMIIAQINPSFEPVAASATALVAASVIVTAILVPIITALYAKRYGNIPKADVEPQPVESLHH</sequence>
<evidence type="ECO:0000255" key="1">
    <source>
        <dbReference type="HAMAP-Rule" id="MF_00070"/>
    </source>
</evidence>
<dbReference type="EMBL" id="CP000653">
    <property type="protein sequence ID" value="ABP59003.1"/>
    <property type="molecule type" value="Genomic_DNA"/>
</dbReference>
<dbReference type="RefSeq" id="WP_011915576.1">
    <property type="nucleotide sequence ID" value="NC_009436.1"/>
</dbReference>
<dbReference type="STRING" id="399742.Ent638_0314"/>
<dbReference type="KEGG" id="ent:Ent638_0314"/>
<dbReference type="eggNOG" id="ENOG502Z7JT">
    <property type="taxonomic scope" value="Bacteria"/>
</dbReference>
<dbReference type="HOGENOM" id="CLU_057476_0_1_6"/>
<dbReference type="OrthoDB" id="3185611at2"/>
<dbReference type="Proteomes" id="UP000000230">
    <property type="component" value="Chromosome"/>
</dbReference>
<dbReference type="GO" id="GO:0005886">
    <property type="term" value="C:plasma membrane"/>
    <property type="evidence" value="ECO:0007669"/>
    <property type="project" value="UniProtKB-SubCell"/>
</dbReference>
<dbReference type="GO" id="GO:0015649">
    <property type="term" value="F:2-keto-3-deoxygluconate:proton symporter activity"/>
    <property type="evidence" value="ECO:0007669"/>
    <property type="project" value="UniProtKB-UniRule"/>
</dbReference>
<dbReference type="HAMAP" id="MF_00070">
    <property type="entry name" value="KdgT"/>
    <property type="match status" value="1"/>
</dbReference>
<dbReference type="InterPro" id="IPR004684">
    <property type="entry name" value="2keto-3dGluconate_permease"/>
</dbReference>
<dbReference type="InterPro" id="IPR018395">
    <property type="entry name" value="2keto-3dGluconate_permease_sub"/>
</dbReference>
<dbReference type="NCBIfam" id="TIGR00793">
    <property type="entry name" value="kdgT"/>
    <property type="match status" value="1"/>
</dbReference>
<dbReference type="Pfam" id="PF03812">
    <property type="entry name" value="KdgT"/>
    <property type="match status" value="1"/>
</dbReference>
<keyword id="KW-0997">Cell inner membrane</keyword>
<keyword id="KW-1003">Cell membrane</keyword>
<keyword id="KW-0472">Membrane</keyword>
<keyword id="KW-0762">Sugar transport</keyword>
<keyword id="KW-0769">Symport</keyword>
<keyword id="KW-0812">Transmembrane</keyword>
<keyword id="KW-1133">Transmembrane helix</keyword>
<keyword id="KW-0813">Transport</keyword>
<reference key="1">
    <citation type="journal article" date="2010" name="PLoS Genet.">
        <title>Genome sequence of the plant growth promoting endophytic bacterium Enterobacter sp. 638.</title>
        <authorList>
            <person name="Taghavi S."/>
            <person name="van der Lelie D."/>
            <person name="Hoffman A."/>
            <person name="Zhang Y.B."/>
            <person name="Walla M.D."/>
            <person name="Vangronsveld J."/>
            <person name="Newman L."/>
            <person name="Monchy S."/>
        </authorList>
    </citation>
    <scope>NUCLEOTIDE SEQUENCE [LARGE SCALE GENOMIC DNA]</scope>
    <source>
        <strain>638</strain>
    </source>
</reference>
<gene>
    <name evidence="1" type="primary">kdgT</name>
    <name type="ordered locus">Ent638_0314</name>
</gene>
<organism>
    <name type="scientific">Enterobacter sp. (strain 638)</name>
    <dbReference type="NCBI Taxonomy" id="399742"/>
    <lineage>
        <taxon>Bacteria</taxon>
        <taxon>Pseudomonadati</taxon>
        <taxon>Pseudomonadota</taxon>
        <taxon>Gammaproteobacteria</taxon>
        <taxon>Enterobacterales</taxon>
        <taxon>Enterobacteriaceae</taxon>
        <taxon>Enterobacter</taxon>
    </lineage>
</organism>
<protein>
    <recommendedName>
        <fullName evidence="1">2-keto-3-deoxygluconate permease</fullName>
        <shortName evidence="1">KDG permease</shortName>
    </recommendedName>
</protein>
<proteinExistence type="inferred from homology"/>
<feature type="chain" id="PRO_1000057467" description="2-keto-3-deoxygluconate permease">
    <location>
        <begin position="1"/>
        <end position="331"/>
    </location>
</feature>
<feature type="transmembrane region" description="Helical" evidence="1">
    <location>
        <begin position="10"/>
        <end position="30"/>
    </location>
</feature>
<feature type="transmembrane region" description="Helical" evidence="1">
    <location>
        <begin position="42"/>
        <end position="62"/>
    </location>
</feature>
<feature type="transmembrane region" description="Helical" evidence="1">
    <location>
        <begin position="77"/>
        <end position="97"/>
    </location>
</feature>
<feature type="transmembrane region" description="Helical" evidence="1">
    <location>
        <begin position="100"/>
        <end position="120"/>
    </location>
</feature>
<feature type="transmembrane region" description="Helical" evidence="1">
    <location>
        <begin position="141"/>
        <end position="161"/>
    </location>
</feature>
<feature type="transmembrane region" description="Helical" evidence="1">
    <location>
        <begin position="163"/>
        <end position="183"/>
    </location>
</feature>
<feature type="transmembrane region" description="Helical" evidence="1">
    <location>
        <begin position="200"/>
        <end position="220"/>
    </location>
</feature>
<feature type="transmembrane region" description="Helical" evidence="1">
    <location>
        <begin position="224"/>
        <end position="244"/>
    </location>
</feature>
<feature type="transmembrane region" description="Helical" evidence="1">
    <location>
        <begin position="254"/>
        <end position="274"/>
    </location>
</feature>
<feature type="transmembrane region" description="Helical" evidence="1">
    <location>
        <begin position="289"/>
        <end position="309"/>
    </location>
</feature>
<name>KDGT_ENT38</name>
<comment type="function">
    <text evidence="1">Catalyzes the proton-dependent uptake of 2-keto-3-deoxygluconate (KDG) into the cell.</text>
</comment>
<comment type="catalytic activity">
    <reaction evidence="1">
        <text>2-dehydro-3-deoxy-D-gluconate(in) + H(+)(in) = 2-dehydro-3-deoxy-D-gluconate(out) + H(+)(out)</text>
        <dbReference type="Rhea" id="RHEA:29943"/>
        <dbReference type="ChEBI" id="CHEBI:15378"/>
        <dbReference type="ChEBI" id="CHEBI:57990"/>
    </reaction>
    <physiologicalReaction direction="right-to-left" evidence="1">
        <dbReference type="Rhea" id="RHEA:29945"/>
    </physiologicalReaction>
</comment>
<comment type="subcellular location">
    <subcellularLocation>
        <location evidence="1">Cell inner membrane</location>
        <topology evidence="1">Multi-pass membrane protein</topology>
    </subcellularLocation>
</comment>
<comment type="similarity">
    <text evidence="1">Belongs to the KdgT transporter family.</text>
</comment>